<reference key="1">
    <citation type="submission" date="2007-10" db="EMBL/GenBank/DDBJ databases">
        <title>Complete sequence of chromosome 3 of Burkholderia multivorans ATCC 17616.</title>
        <authorList>
            <person name="Copeland A."/>
            <person name="Lucas S."/>
            <person name="Lapidus A."/>
            <person name="Barry K."/>
            <person name="Glavina del Rio T."/>
            <person name="Dalin E."/>
            <person name="Tice H."/>
            <person name="Pitluck S."/>
            <person name="Chain P."/>
            <person name="Malfatti S."/>
            <person name="Shin M."/>
            <person name="Vergez L."/>
            <person name="Schmutz J."/>
            <person name="Larimer F."/>
            <person name="Land M."/>
            <person name="Hauser L."/>
            <person name="Kyrpides N."/>
            <person name="Kim E."/>
            <person name="Tiedje J."/>
            <person name="Richardson P."/>
        </authorList>
    </citation>
    <scope>NUCLEOTIDE SEQUENCE [LARGE SCALE GENOMIC DNA]</scope>
    <source>
        <strain>ATCC 17616 / 249</strain>
    </source>
</reference>
<reference key="2">
    <citation type="submission" date="2007-04" db="EMBL/GenBank/DDBJ databases">
        <title>Complete genome sequence of Burkholderia multivorans ATCC 17616.</title>
        <authorList>
            <person name="Ohtsubo Y."/>
            <person name="Yamashita A."/>
            <person name="Kurokawa K."/>
            <person name="Takami H."/>
            <person name="Yuhara S."/>
            <person name="Nishiyama E."/>
            <person name="Endo R."/>
            <person name="Miyazaki R."/>
            <person name="Ono A."/>
            <person name="Yano K."/>
            <person name="Ito M."/>
            <person name="Sota M."/>
            <person name="Yuji N."/>
            <person name="Hattori M."/>
            <person name="Tsuda M."/>
        </authorList>
    </citation>
    <scope>NUCLEOTIDE SEQUENCE [LARGE SCALE GENOMIC DNA]</scope>
    <source>
        <strain>ATCC 17616 / 249</strain>
    </source>
</reference>
<keyword id="KW-0285">Flavoprotein</keyword>
<keyword id="KW-0288">FMN</keyword>
<keyword id="KW-0520">NAD</keyword>
<keyword id="KW-0521">NADP</keyword>
<keyword id="KW-0547">Nucleotide-binding</keyword>
<keyword id="KW-0560">Oxidoreductase</keyword>
<keyword id="KW-1185">Reference proteome</keyword>
<gene>
    <name type="ordered locus">Bmul_6057</name>
    <name type="ordered locus">BMULJ_05470</name>
</gene>
<dbReference type="EC" id="1.6.5.2" evidence="1"/>
<dbReference type="EMBL" id="CP000870">
    <property type="protein sequence ID" value="ABX19715.1"/>
    <property type="molecule type" value="Genomic_DNA"/>
</dbReference>
<dbReference type="EMBL" id="AP009387">
    <property type="protein sequence ID" value="BAG47302.1"/>
    <property type="molecule type" value="Genomic_DNA"/>
</dbReference>
<dbReference type="SMR" id="A9AT43"/>
<dbReference type="STRING" id="395019.BMULJ_05470"/>
<dbReference type="CAZy" id="AA6">
    <property type="family name" value="Auxiliary Activities 6"/>
</dbReference>
<dbReference type="KEGG" id="bmj:BMULJ_05470"/>
<dbReference type="KEGG" id="bmu:Bmul_6057"/>
<dbReference type="eggNOG" id="COG0655">
    <property type="taxonomic scope" value="Bacteria"/>
</dbReference>
<dbReference type="HOGENOM" id="CLU_051402_0_2_4"/>
<dbReference type="Proteomes" id="UP000008815">
    <property type="component" value="Chromosome 3"/>
</dbReference>
<dbReference type="GO" id="GO:0016020">
    <property type="term" value="C:membrane"/>
    <property type="evidence" value="ECO:0007669"/>
    <property type="project" value="TreeGrafter"/>
</dbReference>
<dbReference type="GO" id="GO:0050660">
    <property type="term" value="F:flavin adenine dinucleotide binding"/>
    <property type="evidence" value="ECO:0007669"/>
    <property type="project" value="UniProtKB-UniRule"/>
</dbReference>
<dbReference type="GO" id="GO:0010181">
    <property type="term" value="F:FMN binding"/>
    <property type="evidence" value="ECO:0007669"/>
    <property type="project" value="InterPro"/>
</dbReference>
<dbReference type="GO" id="GO:0051287">
    <property type="term" value="F:NAD binding"/>
    <property type="evidence" value="ECO:0007669"/>
    <property type="project" value="UniProtKB-UniRule"/>
</dbReference>
<dbReference type="GO" id="GO:0050136">
    <property type="term" value="F:NADH:ubiquinone reductase (non-electrogenic) activity"/>
    <property type="evidence" value="ECO:0007669"/>
    <property type="project" value="RHEA"/>
</dbReference>
<dbReference type="GO" id="GO:0050661">
    <property type="term" value="F:NADP binding"/>
    <property type="evidence" value="ECO:0007669"/>
    <property type="project" value="UniProtKB-UniRule"/>
</dbReference>
<dbReference type="GO" id="GO:0008753">
    <property type="term" value="F:NADPH dehydrogenase (quinone) activity"/>
    <property type="evidence" value="ECO:0007669"/>
    <property type="project" value="RHEA"/>
</dbReference>
<dbReference type="FunFam" id="3.40.50.360:FF:000001">
    <property type="entry name" value="NAD(P)H dehydrogenase (Quinone) FQR1-like"/>
    <property type="match status" value="1"/>
</dbReference>
<dbReference type="Gene3D" id="3.40.50.360">
    <property type="match status" value="1"/>
</dbReference>
<dbReference type="HAMAP" id="MF_01017">
    <property type="entry name" value="NQOR"/>
    <property type="match status" value="1"/>
</dbReference>
<dbReference type="InterPro" id="IPR008254">
    <property type="entry name" value="Flavodoxin/NO_synth"/>
</dbReference>
<dbReference type="InterPro" id="IPR029039">
    <property type="entry name" value="Flavoprotein-like_sf"/>
</dbReference>
<dbReference type="InterPro" id="IPR010089">
    <property type="entry name" value="Flavoprotein_WrbA-like"/>
</dbReference>
<dbReference type="InterPro" id="IPR005025">
    <property type="entry name" value="FMN_Rdtase-like_dom"/>
</dbReference>
<dbReference type="InterPro" id="IPR037513">
    <property type="entry name" value="NQO"/>
</dbReference>
<dbReference type="NCBIfam" id="TIGR01755">
    <property type="entry name" value="flav_wrbA"/>
    <property type="match status" value="1"/>
</dbReference>
<dbReference type="NCBIfam" id="NF002999">
    <property type="entry name" value="PRK03767.1"/>
    <property type="match status" value="1"/>
</dbReference>
<dbReference type="PANTHER" id="PTHR30546">
    <property type="entry name" value="FLAVODOXIN-RELATED PROTEIN WRBA-RELATED"/>
    <property type="match status" value="1"/>
</dbReference>
<dbReference type="PANTHER" id="PTHR30546:SF23">
    <property type="entry name" value="FLAVOPROTEIN-LIKE PROTEIN YCP4-RELATED"/>
    <property type="match status" value="1"/>
</dbReference>
<dbReference type="Pfam" id="PF03358">
    <property type="entry name" value="FMN_red"/>
    <property type="match status" value="1"/>
</dbReference>
<dbReference type="SUPFAM" id="SSF52218">
    <property type="entry name" value="Flavoproteins"/>
    <property type="match status" value="1"/>
</dbReference>
<dbReference type="PROSITE" id="PS50902">
    <property type="entry name" value="FLAVODOXIN_LIKE"/>
    <property type="match status" value="1"/>
</dbReference>
<feature type="chain" id="PRO_1000200619" description="NAD(P)H dehydrogenase (quinone)">
    <location>
        <begin position="1"/>
        <end position="200"/>
    </location>
</feature>
<feature type="domain" description="Flavodoxin-like" evidence="1">
    <location>
        <begin position="4"/>
        <end position="191"/>
    </location>
</feature>
<feature type="binding site" evidence="1">
    <location>
        <begin position="10"/>
        <end position="15"/>
    </location>
    <ligand>
        <name>FMN</name>
        <dbReference type="ChEBI" id="CHEBI:58210"/>
    </ligand>
</feature>
<feature type="binding site" evidence="1">
    <location>
        <position position="12"/>
    </location>
    <ligand>
        <name>NAD(+)</name>
        <dbReference type="ChEBI" id="CHEBI:57540"/>
    </ligand>
</feature>
<feature type="binding site" evidence="1">
    <location>
        <begin position="79"/>
        <end position="81"/>
    </location>
    <ligand>
        <name>FMN</name>
        <dbReference type="ChEBI" id="CHEBI:58210"/>
    </ligand>
</feature>
<feature type="binding site" evidence="1">
    <location>
        <position position="99"/>
    </location>
    <ligand>
        <name>substrate</name>
    </ligand>
</feature>
<feature type="binding site" evidence="1">
    <location>
        <begin position="114"/>
        <end position="120"/>
    </location>
    <ligand>
        <name>FMN</name>
        <dbReference type="ChEBI" id="CHEBI:58210"/>
    </ligand>
</feature>
<feature type="binding site" evidence="1">
    <location>
        <position position="135"/>
    </location>
    <ligand>
        <name>FMN</name>
        <dbReference type="ChEBI" id="CHEBI:58210"/>
    </ligand>
</feature>
<proteinExistence type="inferred from homology"/>
<sequence length="200" mass="20927">MAKVLVLYYSSYGHVETMAQQVAEGAKSVPGVEVTLKRVPETIPADQAKAIGIKTDQAAPVATVDELADYDAILFGTPTRFGNMAGQMRTFLDQTGGLWMKGALVGKIGSVFASTGTQHGGQETTITSFHTTLLHHGMVIVGVPYACSGLVNMNEITGGTPYGATTLAGADGSRQPSANELDIARYQGKHVAELAVKLAS</sequence>
<comment type="catalytic activity">
    <reaction evidence="1">
        <text>a quinone + NADH + H(+) = a quinol + NAD(+)</text>
        <dbReference type="Rhea" id="RHEA:46160"/>
        <dbReference type="ChEBI" id="CHEBI:15378"/>
        <dbReference type="ChEBI" id="CHEBI:24646"/>
        <dbReference type="ChEBI" id="CHEBI:57540"/>
        <dbReference type="ChEBI" id="CHEBI:57945"/>
        <dbReference type="ChEBI" id="CHEBI:132124"/>
        <dbReference type="EC" id="1.6.5.2"/>
    </reaction>
</comment>
<comment type="catalytic activity">
    <reaction evidence="1">
        <text>a quinone + NADPH + H(+) = a quinol + NADP(+)</text>
        <dbReference type="Rhea" id="RHEA:46164"/>
        <dbReference type="ChEBI" id="CHEBI:15378"/>
        <dbReference type="ChEBI" id="CHEBI:24646"/>
        <dbReference type="ChEBI" id="CHEBI:57783"/>
        <dbReference type="ChEBI" id="CHEBI:58349"/>
        <dbReference type="ChEBI" id="CHEBI:132124"/>
        <dbReference type="EC" id="1.6.5.2"/>
    </reaction>
</comment>
<comment type="cofactor">
    <cofactor evidence="1">
        <name>FMN</name>
        <dbReference type="ChEBI" id="CHEBI:58210"/>
    </cofactor>
    <text evidence="1">Binds 1 FMN per monomer.</text>
</comment>
<comment type="similarity">
    <text evidence="1">Belongs to the WrbA family.</text>
</comment>
<name>NQOR_BURM1</name>
<protein>
    <recommendedName>
        <fullName evidence="1">NAD(P)H dehydrogenase (quinone)</fullName>
        <ecNumber evidence="1">1.6.5.2</ecNumber>
    </recommendedName>
    <alternativeName>
        <fullName>Flavoprotein WrbA</fullName>
    </alternativeName>
    <alternativeName>
        <fullName evidence="1">NAD(P)H:quinone oxidoreductase</fullName>
        <shortName evidence="1">NQO</shortName>
    </alternativeName>
</protein>
<accession>A9AT43</accession>
<organism>
    <name type="scientific">Burkholderia multivorans (strain ATCC 17616 / 249)</name>
    <dbReference type="NCBI Taxonomy" id="395019"/>
    <lineage>
        <taxon>Bacteria</taxon>
        <taxon>Pseudomonadati</taxon>
        <taxon>Pseudomonadota</taxon>
        <taxon>Betaproteobacteria</taxon>
        <taxon>Burkholderiales</taxon>
        <taxon>Burkholderiaceae</taxon>
        <taxon>Burkholderia</taxon>
        <taxon>Burkholderia cepacia complex</taxon>
    </lineage>
</organism>
<evidence type="ECO:0000255" key="1">
    <source>
        <dbReference type="HAMAP-Rule" id="MF_01017"/>
    </source>
</evidence>